<dbReference type="EMBL" id="AB016873">
    <property type="protein sequence ID" value="BAB10354.1"/>
    <property type="molecule type" value="Genomic_DNA"/>
</dbReference>
<dbReference type="EMBL" id="AB026662">
    <property type="status" value="NOT_ANNOTATED_CDS"/>
    <property type="molecule type" value="Genomic_DNA"/>
</dbReference>
<dbReference type="EMBL" id="CP002688">
    <property type="protein sequence ID" value="AED94230.1"/>
    <property type="molecule type" value="Genomic_DNA"/>
</dbReference>
<dbReference type="EMBL" id="AY059809">
    <property type="protein sequence ID" value="AAL24291.1"/>
    <property type="molecule type" value="mRNA"/>
</dbReference>
<dbReference type="EMBL" id="AY048276">
    <property type="protein sequence ID" value="AAK82538.1"/>
    <property type="molecule type" value="mRNA"/>
</dbReference>
<dbReference type="EMBL" id="AY072520">
    <property type="protein sequence ID" value="AAL66935.1"/>
    <property type="molecule type" value="mRNA"/>
</dbReference>
<dbReference type="EMBL" id="AY072628">
    <property type="protein sequence ID" value="AAL62019.1"/>
    <property type="molecule type" value="mRNA"/>
</dbReference>
<dbReference type="EMBL" id="M38379">
    <property type="protein sequence ID" value="AAA32762.1"/>
    <property type="molecule type" value="mRNA"/>
</dbReference>
<dbReference type="PIR" id="T50929">
    <property type="entry name" value="T50929"/>
</dbReference>
<dbReference type="RefSeq" id="NP_176814.1">
    <molecule id="P0DH95-1"/>
    <property type="nucleotide sequence ID" value="NM_105312.4"/>
</dbReference>
<dbReference type="RefSeq" id="NP_198594.1">
    <molecule id="P0DH95-1"/>
    <property type="nucleotide sequence ID" value="NM_123137.4"/>
</dbReference>
<dbReference type="SMR" id="P0DH95"/>
<dbReference type="BioGRID" id="19007">
    <property type="interactions" value="143"/>
</dbReference>
<dbReference type="BioGRID" id="28180">
    <property type="interactions" value="3"/>
</dbReference>
<dbReference type="FunCoup" id="P0DH95">
    <property type="interactions" value="3098"/>
</dbReference>
<dbReference type="STRING" id="3702.P0DH95"/>
<dbReference type="iPTMnet" id="P0DH95"/>
<dbReference type="PaxDb" id="3702-AT1G66410.2"/>
<dbReference type="EnsemblPlants" id="AT1G66410.1">
    <property type="protein sequence ID" value="AT1G66410.1"/>
    <property type="gene ID" value="AT1G66410"/>
</dbReference>
<dbReference type="EnsemblPlants" id="AT5G37780.1">
    <property type="protein sequence ID" value="AT5G37780.1"/>
    <property type="gene ID" value="AT5G37780"/>
</dbReference>
<dbReference type="GeneID" id="833756"/>
<dbReference type="Gramene" id="AT1G66410.1">
    <property type="protein sequence ID" value="AT1G66410.1"/>
    <property type="gene ID" value="AT1G66410"/>
</dbReference>
<dbReference type="Gramene" id="AT5G37780.1">
    <property type="protein sequence ID" value="AT5G37780.1"/>
    <property type="gene ID" value="AT5G37780"/>
</dbReference>
<dbReference type="KEGG" id="ath:AT1G66410"/>
<dbReference type="KEGG" id="ath:AT5G37780"/>
<dbReference type="Araport" id="AT5G37780"/>
<dbReference type="TAIR" id="AT5G37780">
    <property type="gene designation" value="CAM1"/>
</dbReference>
<dbReference type="HOGENOM" id="CLU_061288_2_0_1"/>
<dbReference type="InParanoid" id="P0DH95"/>
<dbReference type="OMA" id="GQINCHT"/>
<dbReference type="OrthoDB" id="1041674at2759"/>
<dbReference type="PhylomeDB" id="P0DH95"/>
<dbReference type="PRO" id="PR:P0DH95"/>
<dbReference type="Proteomes" id="UP000006548">
    <property type="component" value="Chromosome 5"/>
</dbReference>
<dbReference type="ExpressionAtlas" id="P0DH95">
    <property type="expression patterns" value="baseline and differential"/>
</dbReference>
<dbReference type="GO" id="GO:0005737">
    <property type="term" value="C:cytoplasm"/>
    <property type="evidence" value="ECO:0007669"/>
    <property type="project" value="UniProtKB-SubCell"/>
</dbReference>
<dbReference type="GO" id="GO:0005886">
    <property type="term" value="C:plasma membrane"/>
    <property type="evidence" value="ECO:0007669"/>
    <property type="project" value="UniProtKB-SubCell"/>
</dbReference>
<dbReference type="GO" id="GO:0005509">
    <property type="term" value="F:calcium ion binding"/>
    <property type="evidence" value="ECO:0007669"/>
    <property type="project" value="InterPro"/>
</dbReference>
<dbReference type="CDD" id="cd00051">
    <property type="entry name" value="EFh"/>
    <property type="match status" value="2"/>
</dbReference>
<dbReference type="FunFam" id="1.10.238.10:FF:000034">
    <property type="entry name" value="Calmodulin"/>
    <property type="match status" value="1"/>
</dbReference>
<dbReference type="FunFam" id="1.10.238.10:FF:000042">
    <property type="entry name" value="Calmodulin"/>
    <property type="match status" value="1"/>
</dbReference>
<dbReference type="Gene3D" id="1.10.238.10">
    <property type="entry name" value="EF-hand"/>
    <property type="match status" value="3"/>
</dbReference>
<dbReference type="InterPro" id="IPR050230">
    <property type="entry name" value="CALM/Myosin/TropC-like"/>
</dbReference>
<dbReference type="InterPro" id="IPR011992">
    <property type="entry name" value="EF-hand-dom_pair"/>
</dbReference>
<dbReference type="InterPro" id="IPR018247">
    <property type="entry name" value="EF_Hand_1_Ca_BS"/>
</dbReference>
<dbReference type="InterPro" id="IPR002048">
    <property type="entry name" value="EF_hand_dom"/>
</dbReference>
<dbReference type="PANTHER" id="PTHR23048:SF53">
    <property type="entry name" value="CALMODULIN"/>
    <property type="match status" value="1"/>
</dbReference>
<dbReference type="PANTHER" id="PTHR23048">
    <property type="entry name" value="MYOSIN LIGHT CHAIN 1, 3"/>
    <property type="match status" value="1"/>
</dbReference>
<dbReference type="Pfam" id="PF13499">
    <property type="entry name" value="EF-hand_7"/>
    <property type="match status" value="2"/>
</dbReference>
<dbReference type="SMART" id="SM00054">
    <property type="entry name" value="EFh"/>
    <property type="match status" value="4"/>
</dbReference>
<dbReference type="SUPFAM" id="SSF47473">
    <property type="entry name" value="EF-hand"/>
    <property type="match status" value="1"/>
</dbReference>
<dbReference type="PROSITE" id="PS00018">
    <property type="entry name" value="EF_HAND_1"/>
    <property type="match status" value="4"/>
</dbReference>
<dbReference type="PROSITE" id="PS50222">
    <property type="entry name" value="EF_HAND_2"/>
    <property type="match status" value="4"/>
</dbReference>
<feature type="chain" id="PRO_0000415789" description="Calmodulin-1">
    <location>
        <begin position="1"/>
        <end position="149"/>
    </location>
</feature>
<feature type="domain" description="EF-hand 1" evidence="1">
    <location>
        <begin position="8"/>
        <end position="43"/>
    </location>
</feature>
<feature type="domain" description="EF-hand 2" evidence="1">
    <location>
        <begin position="44"/>
        <end position="79"/>
    </location>
</feature>
<feature type="domain" description="EF-hand 3" evidence="1">
    <location>
        <begin position="81"/>
        <end position="116"/>
    </location>
</feature>
<feature type="domain" description="EF-hand 4" evidence="1">
    <location>
        <begin position="117"/>
        <end position="149"/>
    </location>
</feature>
<feature type="binding site" evidence="1">
    <location>
        <position position="21"/>
    </location>
    <ligand>
        <name>Ca(2+)</name>
        <dbReference type="ChEBI" id="CHEBI:29108"/>
        <label>1</label>
    </ligand>
</feature>
<feature type="binding site" evidence="1">
    <location>
        <position position="23"/>
    </location>
    <ligand>
        <name>Ca(2+)</name>
        <dbReference type="ChEBI" id="CHEBI:29108"/>
        <label>1</label>
    </ligand>
</feature>
<feature type="binding site" evidence="1">
    <location>
        <position position="25"/>
    </location>
    <ligand>
        <name>Ca(2+)</name>
        <dbReference type="ChEBI" id="CHEBI:29108"/>
        <label>1</label>
    </ligand>
</feature>
<feature type="binding site" evidence="1">
    <location>
        <position position="27"/>
    </location>
    <ligand>
        <name>Ca(2+)</name>
        <dbReference type="ChEBI" id="CHEBI:29108"/>
        <label>1</label>
    </ligand>
</feature>
<feature type="binding site" evidence="1">
    <location>
        <position position="32"/>
    </location>
    <ligand>
        <name>Ca(2+)</name>
        <dbReference type="ChEBI" id="CHEBI:29108"/>
        <label>1</label>
    </ligand>
</feature>
<feature type="binding site" evidence="1">
    <location>
        <position position="57"/>
    </location>
    <ligand>
        <name>Ca(2+)</name>
        <dbReference type="ChEBI" id="CHEBI:29108"/>
        <label>2</label>
    </ligand>
</feature>
<feature type="binding site" evidence="1">
    <location>
        <position position="59"/>
    </location>
    <ligand>
        <name>Ca(2+)</name>
        <dbReference type="ChEBI" id="CHEBI:29108"/>
        <label>2</label>
    </ligand>
</feature>
<feature type="binding site" evidence="1">
    <location>
        <position position="61"/>
    </location>
    <ligand>
        <name>Ca(2+)</name>
        <dbReference type="ChEBI" id="CHEBI:29108"/>
        <label>2</label>
    </ligand>
</feature>
<feature type="binding site" evidence="1">
    <location>
        <position position="63"/>
    </location>
    <ligand>
        <name>Ca(2+)</name>
        <dbReference type="ChEBI" id="CHEBI:29108"/>
        <label>2</label>
    </ligand>
</feature>
<feature type="binding site" evidence="1">
    <location>
        <position position="68"/>
    </location>
    <ligand>
        <name>Ca(2+)</name>
        <dbReference type="ChEBI" id="CHEBI:29108"/>
        <label>2</label>
    </ligand>
</feature>
<feature type="binding site" evidence="1">
    <location>
        <position position="94"/>
    </location>
    <ligand>
        <name>Ca(2+)</name>
        <dbReference type="ChEBI" id="CHEBI:29108"/>
        <label>3</label>
    </ligand>
</feature>
<feature type="binding site" evidence="1">
    <location>
        <position position="96"/>
    </location>
    <ligand>
        <name>Ca(2+)</name>
        <dbReference type="ChEBI" id="CHEBI:29108"/>
        <label>3</label>
    </ligand>
</feature>
<feature type="binding site" evidence="1">
    <location>
        <position position="98"/>
    </location>
    <ligand>
        <name>Ca(2+)</name>
        <dbReference type="ChEBI" id="CHEBI:29108"/>
        <label>3</label>
    </ligand>
</feature>
<feature type="binding site" evidence="1">
    <location>
        <position position="105"/>
    </location>
    <ligand>
        <name>Ca(2+)</name>
        <dbReference type="ChEBI" id="CHEBI:29108"/>
        <label>3</label>
    </ligand>
</feature>
<feature type="binding site" evidence="1">
    <location>
        <position position="130"/>
    </location>
    <ligand>
        <name>Ca(2+)</name>
        <dbReference type="ChEBI" id="CHEBI:29108"/>
        <label>4</label>
    </ligand>
</feature>
<feature type="binding site" evidence="1">
    <location>
        <position position="132"/>
    </location>
    <ligand>
        <name>Ca(2+)</name>
        <dbReference type="ChEBI" id="CHEBI:29108"/>
        <label>4</label>
    </ligand>
</feature>
<feature type="binding site" evidence="1">
    <location>
        <position position="134"/>
    </location>
    <ligand>
        <name>Ca(2+)</name>
        <dbReference type="ChEBI" id="CHEBI:29108"/>
        <label>4</label>
    </ligand>
</feature>
<feature type="binding site" evidence="1">
    <location>
        <position position="136"/>
    </location>
    <ligand>
        <name>Ca(2+)</name>
        <dbReference type="ChEBI" id="CHEBI:29108"/>
        <label>4</label>
    </ligand>
</feature>
<feature type="binding site" evidence="1">
    <location>
        <position position="141"/>
    </location>
    <ligand>
        <name>Ca(2+)</name>
        <dbReference type="ChEBI" id="CHEBI:29108"/>
        <label>4</label>
    </ligand>
</feature>
<sequence>MADQLTDEQISEFKEAFSLFDKDGDGCITTKELGTVMRSLGQNPTEAELQDMINEVDADGNGTIDFPEFLNLMAKKMKDTDSEEELKEAFRVFDKDQNGFISAAELRHVMTNLGEKLTDEEVEEMIREADVDGDGQINYEEFVKIMMAK</sequence>
<comment type="function">
    <text>Calmodulin mediates the control of a large number of enzymes, ion channels and other proteins by Ca(2+). Among the enzymes to be stimulated by the calmodulin-Ca(2+) complex are a number of protein kinases and phosphatases.</text>
</comment>
<comment type="subunit">
    <text evidence="3 4 5">Interacts with ZAR1 (via CaMBD domain) (PubMed:27014878). Binds to IQD1 (PubMed:23204523). Binds to MEE62 in a calcium-dependent manner (PubMed:14720124).</text>
</comment>
<comment type="subcellular location">
    <subcellularLocation>
        <location evidence="5">Cytoplasm</location>
    </subcellularLocation>
    <subcellularLocation>
        <location evidence="2">Cell membrane</location>
    </subcellularLocation>
    <text evidence="5">Localizes to the plasma membrane when interacting with ZAR1.</text>
</comment>
<comment type="alternative products">
    <event type="alternative splicing"/>
    <isoform>
        <id>P0DH95-1</id>
        <name>1</name>
        <sequence type="displayed"/>
    </isoform>
    <text>A number of isoforms are produced. According to EST sequences.</text>
</comment>
<comment type="miscellaneous">
    <text>This protein has four functional calcium-binding sites.</text>
</comment>
<comment type="similarity">
    <text evidence="6">Belongs to the calmodulin family.</text>
</comment>
<organism>
    <name type="scientific">Arabidopsis thaliana</name>
    <name type="common">Mouse-ear cress</name>
    <dbReference type="NCBI Taxonomy" id="3702"/>
    <lineage>
        <taxon>Eukaryota</taxon>
        <taxon>Viridiplantae</taxon>
        <taxon>Streptophyta</taxon>
        <taxon>Embryophyta</taxon>
        <taxon>Tracheophyta</taxon>
        <taxon>Spermatophyta</taxon>
        <taxon>Magnoliopsida</taxon>
        <taxon>eudicotyledons</taxon>
        <taxon>Gunneridae</taxon>
        <taxon>Pentapetalae</taxon>
        <taxon>rosids</taxon>
        <taxon>malvids</taxon>
        <taxon>Brassicales</taxon>
        <taxon>Brassicaceae</taxon>
        <taxon>Camelineae</taxon>
        <taxon>Arabidopsis</taxon>
    </lineage>
</organism>
<proteinExistence type="evidence at protein level"/>
<name>CALM1_ARATH</name>
<keyword id="KW-0025">Alternative splicing</keyword>
<keyword id="KW-0106">Calcium</keyword>
<keyword id="KW-1003">Cell membrane</keyword>
<keyword id="KW-0963">Cytoplasm</keyword>
<keyword id="KW-0472">Membrane</keyword>
<keyword id="KW-0479">Metal-binding</keyword>
<keyword id="KW-1185">Reference proteome</keyword>
<keyword id="KW-0677">Repeat</keyword>
<gene>
    <name type="primary">CAM1</name>
    <name type="ordered locus">At5g37780</name>
    <name type="ORF">K22F20.2</name>
    <name type="ORF">T31G3.3</name>
</gene>
<reference key="1">
    <citation type="journal article" date="1998" name="DNA Res.">
        <title>Structural analysis of Arabidopsis thaliana chromosome 5. VII. Sequence features of the regions of 1,013,767 bp covered by sixteen physically assigned P1 and TAC clones.</title>
        <authorList>
            <person name="Nakamura Y."/>
            <person name="Sato S."/>
            <person name="Asamizu E."/>
            <person name="Kaneko T."/>
            <person name="Kotani H."/>
            <person name="Miyajima N."/>
            <person name="Tabata S."/>
        </authorList>
    </citation>
    <scope>NUCLEOTIDE SEQUENCE [LARGE SCALE GENOMIC DNA]</scope>
    <source>
        <strain>cv. Columbia</strain>
    </source>
</reference>
<reference key="2">
    <citation type="submission" date="1999-05" db="EMBL/GenBank/DDBJ databases">
        <title>Structural analysis of Arabidopsis thaliana chromosome 5. XI.</title>
        <authorList>
            <person name="Kaneko T."/>
            <person name="Katoh T."/>
            <person name="Asamizu E."/>
            <person name="Sato S."/>
            <person name="Nakamura Y."/>
            <person name="Kotani H."/>
            <person name="Tabata S."/>
        </authorList>
    </citation>
    <scope>NUCLEOTIDE SEQUENCE [LARGE SCALE GENOMIC DNA]</scope>
    <source>
        <strain>cv. Columbia</strain>
    </source>
</reference>
<reference key="3">
    <citation type="journal article" date="2017" name="Plant J.">
        <title>Araport11: a complete reannotation of the Arabidopsis thaliana reference genome.</title>
        <authorList>
            <person name="Cheng C.Y."/>
            <person name="Krishnakumar V."/>
            <person name="Chan A.P."/>
            <person name="Thibaud-Nissen F."/>
            <person name="Schobel S."/>
            <person name="Town C.D."/>
        </authorList>
    </citation>
    <scope>GENOME REANNOTATION</scope>
    <source>
        <strain>cv. Columbia</strain>
    </source>
</reference>
<reference key="4">
    <citation type="journal article" date="2003" name="Science">
        <title>Empirical analysis of transcriptional activity in the Arabidopsis genome.</title>
        <authorList>
            <person name="Yamada K."/>
            <person name="Lim J."/>
            <person name="Dale J.M."/>
            <person name="Chen H."/>
            <person name="Shinn P."/>
            <person name="Palm C.J."/>
            <person name="Southwick A.M."/>
            <person name="Wu H.C."/>
            <person name="Kim C.J."/>
            <person name="Nguyen M."/>
            <person name="Pham P.K."/>
            <person name="Cheuk R.F."/>
            <person name="Karlin-Newmann G."/>
            <person name="Liu S.X."/>
            <person name="Lam B."/>
            <person name="Sakano H."/>
            <person name="Wu T."/>
            <person name="Yu G."/>
            <person name="Miranda M."/>
            <person name="Quach H.L."/>
            <person name="Tripp M."/>
            <person name="Chang C.H."/>
            <person name="Lee J.M."/>
            <person name="Toriumi M.J."/>
            <person name="Chan M.M."/>
            <person name="Tang C.C."/>
            <person name="Onodera C.S."/>
            <person name="Deng J.M."/>
            <person name="Akiyama K."/>
            <person name="Ansari Y."/>
            <person name="Arakawa T."/>
            <person name="Banh J."/>
            <person name="Banno F."/>
            <person name="Bowser L."/>
            <person name="Brooks S.Y."/>
            <person name="Carninci P."/>
            <person name="Chao Q."/>
            <person name="Choy N."/>
            <person name="Enju A."/>
            <person name="Goldsmith A.D."/>
            <person name="Gurjal M."/>
            <person name="Hansen N.F."/>
            <person name="Hayashizaki Y."/>
            <person name="Johnson-Hopson C."/>
            <person name="Hsuan V.W."/>
            <person name="Iida K."/>
            <person name="Karnes M."/>
            <person name="Khan S."/>
            <person name="Koesema E."/>
            <person name="Ishida J."/>
            <person name="Jiang P.X."/>
            <person name="Jones T."/>
            <person name="Kawai J."/>
            <person name="Kamiya A."/>
            <person name="Meyers C."/>
            <person name="Nakajima M."/>
            <person name="Narusaka M."/>
            <person name="Seki M."/>
            <person name="Sakurai T."/>
            <person name="Satou M."/>
            <person name="Tamse R."/>
            <person name="Vaysberg M."/>
            <person name="Wallender E.K."/>
            <person name="Wong C."/>
            <person name="Yamamura Y."/>
            <person name="Yuan S."/>
            <person name="Shinozaki K."/>
            <person name="Davis R.W."/>
            <person name="Theologis A."/>
            <person name="Ecker J.R."/>
        </authorList>
    </citation>
    <scope>NUCLEOTIDE SEQUENCE [LARGE SCALE MRNA]</scope>
    <source>
        <strain>cv. Columbia</strain>
    </source>
</reference>
<reference key="5">
    <citation type="journal article" date="1991" name="Plant Physiol.">
        <title>Primary structures of Arabidopsis calmodulin isoforms deduced from the sequences of cDNA clones.</title>
        <authorList>
            <person name="Ling V."/>
            <person name="Perera I.Y."/>
            <person name="Zielinski R.E."/>
        </authorList>
    </citation>
    <scope>NUCLEOTIDE SEQUENCE [MRNA] OF 14-149</scope>
</reference>
<reference key="6">
    <citation type="journal article" date="2003" name="New Phytol.">
        <title>Calmodulins and related potential calcium sensors of Arabidopsis.</title>
        <authorList>
            <person name="McCormack E."/>
            <person name="Braam J."/>
        </authorList>
    </citation>
    <scope>GENE FAMILY</scope>
    <scope>NOMENCLATURE</scope>
</reference>
<reference key="7">
    <citation type="journal article" date="2004" name="Biochem. J.">
        <title>A receptor-like kinase from Arabidopsis thaliana is a calmodulin-binding protein.</title>
        <authorList>
            <person name="Charpenteau M."/>
            <person name="Jaworski K."/>
            <person name="Ramirez B.C."/>
            <person name="Tretyn A."/>
            <person name="Ranjeva R."/>
            <person name="Ranty B."/>
        </authorList>
    </citation>
    <scope>INTERACTION WITH MEE62</scope>
</reference>
<reference key="8">
    <citation type="journal article" date="2013" name="J. Biol. Chem.">
        <title>Arabidopsis calmodulin-binding protein IQ67-domain 1 localizes to microtubules and interacts with kinesin light chain-related protein-1.</title>
        <authorList>
            <person name="Buerstenbinder K."/>
            <person name="Savchenko T."/>
            <person name="Mueller J."/>
            <person name="Adamson A.W."/>
            <person name="Stamm G."/>
            <person name="Kwong R."/>
            <person name="Zipp B.J."/>
            <person name="Dinesh D.C."/>
            <person name="Abel S."/>
        </authorList>
    </citation>
    <scope>INTERACTION WITH IQD1</scope>
    <source>
        <strain>cv. Columbia</strain>
    </source>
</reference>
<reference key="9">
    <citation type="journal article" date="2016" name="PLoS Genet.">
        <title>The Arabidopsis receptor kinase ZAR1 is required for zygote asymmetric division and its daughter cell fate.</title>
        <authorList>
            <person name="Yu T.Y."/>
            <person name="Shi D.Q."/>
            <person name="Jia P.F."/>
            <person name="Tang J."/>
            <person name="Li H.J."/>
            <person name="Liu J."/>
            <person name="Yang W.C."/>
        </authorList>
    </citation>
    <scope>SUBCELLULAR LOCATION</scope>
    <scope>INTERACTION WITH ZAR1</scope>
</reference>
<accession>P0DH95</accession>
<accession>P25854</accession>
<accession>Q03510</accession>
<accession>Q9FJ05</accession>
<protein>
    <recommendedName>
        <fullName>Calmodulin-1</fullName>
        <shortName>CaM-1</shortName>
    </recommendedName>
</protein>
<evidence type="ECO:0000255" key="1">
    <source>
        <dbReference type="PROSITE-ProRule" id="PRU00448"/>
    </source>
</evidence>
<evidence type="ECO:0000269" key="2">
    <source>
    </source>
</evidence>
<evidence type="ECO:0000269" key="3">
    <source>
    </source>
</evidence>
<evidence type="ECO:0000269" key="4">
    <source>
    </source>
</evidence>
<evidence type="ECO:0000269" key="5">
    <source>
    </source>
</evidence>
<evidence type="ECO:0000305" key="6"/>